<gene>
    <name evidence="7" type="primary">TPS3</name>
    <name evidence="6" type="synonym">GTS</name>
</gene>
<organism>
    <name type="scientific">Thymus vulgaris</name>
    <name type="common">Thyme</name>
    <dbReference type="NCBI Taxonomy" id="49992"/>
    <lineage>
        <taxon>Eukaryota</taxon>
        <taxon>Viridiplantae</taxon>
        <taxon>Streptophyta</taxon>
        <taxon>Embryophyta</taxon>
        <taxon>Tracheophyta</taxon>
        <taxon>Spermatophyta</taxon>
        <taxon>Magnoliopsida</taxon>
        <taxon>eudicotyledons</taxon>
        <taxon>Gunneridae</taxon>
        <taxon>Pentapetalae</taxon>
        <taxon>asterids</taxon>
        <taxon>lamiids</taxon>
        <taxon>Lamiales</taxon>
        <taxon>Lamiaceae</taxon>
        <taxon>Nepetoideae</taxon>
        <taxon>Mentheae</taxon>
        <taxon>Thymus</taxon>
    </lineage>
</organism>
<comment type="function">
    <text evidence="3">Putative monoterpene synthase.</text>
</comment>
<comment type="cofactor">
    <cofactor evidence="3">
        <name>Mn(2+)</name>
        <dbReference type="ChEBI" id="CHEBI:29035"/>
    </cofactor>
    <cofactor evidence="3">
        <name>Mg(2+)</name>
        <dbReference type="ChEBI" id="CHEBI:18420"/>
    </cofactor>
    <text evidence="3">Binds 3 Mg(2+) or Mn(2+) ions per subunit.</text>
</comment>
<comment type="pathway">
    <text evidence="3">Secondary metabolite biosynthesis; terpenoid biosynthesis.</text>
</comment>
<comment type="subunit">
    <text evidence="1">Homodimer.</text>
</comment>
<comment type="subcellular location">
    <subcellularLocation>
        <location evidence="5">Plastid</location>
        <location evidence="5">Chloroplast</location>
    </subcellularLocation>
</comment>
<comment type="domain">
    <text evidence="4">The Asp-Asp-Xaa-Xaa-Asp/Glu (DDXXD/E) motif is important for the catalytic activity, presumably through binding to Mg(2+).</text>
</comment>
<comment type="miscellaneous">
    <text evidence="7">Missing Asp-356 and Thr-565 residues essential for gamma-terpinene synthase activity.</text>
</comment>
<comment type="similarity">
    <text evidence="7">Belongs to the terpene synthase family.</text>
</comment>
<protein>
    <recommendedName>
        <fullName evidence="7">Putative terpene synthase 3, chloroplastic</fullName>
        <shortName evidence="7">TvTPS3</shortName>
        <ecNumber evidence="3">4.2.3.-</ecNumber>
    </recommendedName>
    <alternativeName>
        <fullName evidence="8">Probably inactive gamma-terpinene synthase</fullName>
    </alternativeName>
</protein>
<reference key="1">
    <citation type="submission" date="2012-04" db="EMBL/GenBank/DDBJ databases">
        <title>Gamma-terpinene synthase from Thymus vulgaris (GTS).</title>
        <authorList>
            <person name="Rudolph K."/>
            <person name="Schweininger J."/>
            <person name="Mueller-Uri F."/>
            <person name="Kreis W."/>
        </authorList>
    </citation>
    <scope>NUCLEOTIDE SEQUENCE [MRNA]</scope>
    <source>
        <tissue>Leaf</tissue>
    </source>
</reference>
<dbReference type="EC" id="4.2.3.-" evidence="3"/>
<dbReference type="EMBL" id="JQ957866">
    <property type="protein sequence ID" value="AFZ41788.1"/>
    <property type="molecule type" value="mRNA"/>
</dbReference>
<dbReference type="SMR" id="K9Y645"/>
<dbReference type="UniPathway" id="UPA00213"/>
<dbReference type="GO" id="GO:0009507">
    <property type="term" value="C:chloroplast"/>
    <property type="evidence" value="ECO:0007669"/>
    <property type="project" value="UniProtKB-SubCell"/>
</dbReference>
<dbReference type="GO" id="GO:0000287">
    <property type="term" value="F:magnesium ion binding"/>
    <property type="evidence" value="ECO:0007669"/>
    <property type="project" value="InterPro"/>
</dbReference>
<dbReference type="GO" id="GO:0042803">
    <property type="term" value="F:protein homodimerization activity"/>
    <property type="evidence" value="ECO:0000250"/>
    <property type="project" value="UniProtKB"/>
</dbReference>
<dbReference type="GO" id="GO:0010333">
    <property type="term" value="F:terpene synthase activity"/>
    <property type="evidence" value="ECO:0007669"/>
    <property type="project" value="InterPro"/>
</dbReference>
<dbReference type="GO" id="GO:0016102">
    <property type="term" value="P:diterpenoid biosynthetic process"/>
    <property type="evidence" value="ECO:0007669"/>
    <property type="project" value="InterPro"/>
</dbReference>
<dbReference type="CDD" id="cd00684">
    <property type="entry name" value="Terpene_cyclase_plant_C1"/>
    <property type="match status" value="1"/>
</dbReference>
<dbReference type="FunFam" id="1.10.600.10:FF:000007">
    <property type="entry name" value="Isoprene synthase, chloroplastic"/>
    <property type="match status" value="1"/>
</dbReference>
<dbReference type="FunFam" id="1.50.10.130:FF:000001">
    <property type="entry name" value="Isoprene synthase, chloroplastic"/>
    <property type="match status" value="1"/>
</dbReference>
<dbReference type="Gene3D" id="1.10.600.10">
    <property type="entry name" value="Farnesyl Diphosphate Synthase"/>
    <property type="match status" value="1"/>
</dbReference>
<dbReference type="Gene3D" id="1.50.10.130">
    <property type="entry name" value="Terpene synthase, N-terminal domain"/>
    <property type="match status" value="1"/>
</dbReference>
<dbReference type="InterPro" id="IPR008949">
    <property type="entry name" value="Isoprenoid_synthase_dom_sf"/>
</dbReference>
<dbReference type="InterPro" id="IPR034741">
    <property type="entry name" value="Terpene_cyclase-like_1_C"/>
</dbReference>
<dbReference type="InterPro" id="IPR044814">
    <property type="entry name" value="Terpene_cyclase_plant_C1"/>
</dbReference>
<dbReference type="InterPro" id="IPR001906">
    <property type="entry name" value="Terpene_synth_N"/>
</dbReference>
<dbReference type="InterPro" id="IPR036965">
    <property type="entry name" value="Terpene_synth_N_sf"/>
</dbReference>
<dbReference type="InterPro" id="IPR050148">
    <property type="entry name" value="Terpene_synthase-like"/>
</dbReference>
<dbReference type="InterPro" id="IPR005630">
    <property type="entry name" value="Terpene_synthase_metal-bd"/>
</dbReference>
<dbReference type="InterPro" id="IPR008930">
    <property type="entry name" value="Terpenoid_cyclase/PrenylTrfase"/>
</dbReference>
<dbReference type="PANTHER" id="PTHR31225">
    <property type="entry name" value="OS04G0344100 PROTEIN-RELATED"/>
    <property type="match status" value="1"/>
</dbReference>
<dbReference type="PANTHER" id="PTHR31225:SF9">
    <property type="entry name" value="TERPENE SYNTHASE 10"/>
    <property type="match status" value="1"/>
</dbReference>
<dbReference type="Pfam" id="PF01397">
    <property type="entry name" value="Terpene_synth"/>
    <property type="match status" value="1"/>
</dbReference>
<dbReference type="Pfam" id="PF03936">
    <property type="entry name" value="Terpene_synth_C"/>
    <property type="match status" value="1"/>
</dbReference>
<dbReference type="SFLD" id="SFLDG01019">
    <property type="entry name" value="Terpene_Cyclase_Like_1_C_Termi"/>
    <property type="match status" value="1"/>
</dbReference>
<dbReference type="SFLD" id="SFLDG01604">
    <property type="entry name" value="Terpene_Cyclase_Like_1_C_Termi"/>
    <property type="match status" value="1"/>
</dbReference>
<dbReference type="SUPFAM" id="SSF48239">
    <property type="entry name" value="Terpenoid cyclases/Protein prenyltransferases"/>
    <property type="match status" value="1"/>
</dbReference>
<dbReference type="SUPFAM" id="SSF48576">
    <property type="entry name" value="Terpenoid synthases"/>
    <property type="match status" value="1"/>
</dbReference>
<sequence>MATLSMQVSTLSKQVKNLNTFGMGSASKLPMVARRVSTIRLRPICSASLQVEEKTRRSGNYQAPVWNNDFIQSFSTDKYKDEKFLKKKEELIAQVKILLNTKMEAVKQLELIEDLRNLGLTYYFEDEFKKILTSIYNEHKGFKNEQVGDLYFTSLAFRLLRLHGFDVSEDVFNFFKNEDGSDFKASLGENTKDVLELYEASFLIRVGEVTLEQARVFSTKILEKKVEEGIKDEKLLAWIQHSLALPLHWRIQRLEARWFLDAYKARKDMNPIIFELGKIDFHIIQETQLQEVQEVSQWWTNTNLAEKLPFVRDRIVECYFWALGLFEPHEYGYQRKMAAIIITFVTIIDDVYDVYGTLDELQLFTDAIRTWDFESISTLPYYMQVCYLALYTYASELAYDILKDQGFNSISYLQRSWLSLVEGFFQEAKWYYAGYTPTLAEYLENAKVSISSPTIISQVYFTLPNSTERTVVENVYGYHNILYLSGMILRLADDLGTTQFELKRGDVQKAIQCYMNDNNATEQEGTEHVKYLLREAWQEMNSAMADPDCPLSEDLVFAAANLGRASQFIYLDGDGHGVQHSEIHNQMGGLIFEPYV</sequence>
<name>GTPS3_THYVU</name>
<keyword id="KW-0150">Chloroplast</keyword>
<keyword id="KW-0456">Lyase</keyword>
<keyword id="KW-0460">Magnesium</keyword>
<keyword id="KW-0464">Manganese</keyword>
<keyword id="KW-0479">Metal-binding</keyword>
<keyword id="KW-0934">Plastid</keyword>
<keyword id="KW-0809">Transit peptide</keyword>
<accession>K9Y645</accession>
<evidence type="ECO:0000250" key="1">
    <source>
        <dbReference type="UniProtKB" id="A0A0M3Q1Q3"/>
    </source>
</evidence>
<evidence type="ECO:0000250" key="2">
    <source>
        <dbReference type="UniProtKB" id="A0A1C9J6A7"/>
    </source>
</evidence>
<evidence type="ECO:0000250" key="3">
    <source>
        <dbReference type="UniProtKB" id="E2E2P0"/>
    </source>
</evidence>
<evidence type="ECO:0000250" key="4">
    <source>
        <dbReference type="UniProtKB" id="Q9X839"/>
    </source>
</evidence>
<evidence type="ECO:0000255" key="5"/>
<evidence type="ECO:0000303" key="6">
    <source ref="1"/>
</evidence>
<evidence type="ECO:0000305" key="7"/>
<evidence type="ECO:0000305" key="8">
    <source ref="1"/>
</evidence>
<proteinExistence type="evidence at transcript level"/>
<feature type="transit peptide" description="Chloroplast" evidence="5">
    <location>
        <begin position="1"/>
        <end position="46"/>
    </location>
</feature>
<feature type="chain" id="PRO_0000453311" description="Putative terpene synthase 3, chloroplastic">
    <location>
        <begin position="47"/>
        <end position="596"/>
    </location>
</feature>
<feature type="region of interest" description="Homodimerization" evidence="1">
    <location>
        <begin position="355"/>
        <end position="361"/>
    </location>
</feature>
<feature type="region of interest" description="Homodimerization" evidence="1">
    <location>
        <begin position="427"/>
        <end position="464"/>
    </location>
</feature>
<feature type="short sequence motif" description="DDXXD motif" evidence="4">
    <location>
        <begin position="349"/>
        <end position="353"/>
    </location>
</feature>
<feature type="binding site" evidence="2">
    <location>
        <position position="349"/>
    </location>
    <ligand>
        <name>Mn(2+)</name>
        <dbReference type="ChEBI" id="CHEBI:29035"/>
        <label>1</label>
    </ligand>
</feature>
<feature type="binding site" evidence="2">
    <location>
        <position position="349"/>
    </location>
    <ligand>
        <name>Mn(2+)</name>
        <dbReference type="ChEBI" id="CHEBI:29035"/>
        <label>2</label>
    </ligand>
</feature>
<feature type="binding site" evidence="2">
    <location>
        <position position="353"/>
    </location>
    <ligand>
        <name>Mn(2+)</name>
        <dbReference type="ChEBI" id="CHEBI:29035"/>
        <label>1</label>
    </ligand>
</feature>
<feature type="binding site" evidence="2">
    <location>
        <position position="353"/>
    </location>
    <ligand>
        <name>Mn(2+)</name>
        <dbReference type="ChEBI" id="CHEBI:29035"/>
        <label>2</label>
    </ligand>
</feature>
<feature type="binding site" evidence="2">
    <location>
        <position position="493"/>
    </location>
    <ligand>
        <name>Mn(2+)</name>
        <dbReference type="ChEBI" id="CHEBI:29035"/>
        <label>3</label>
    </ligand>
</feature>
<feature type="binding site" evidence="2">
    <location>
        <position position="501"/>
    </location>
    <ligand>
        <name>Mn(2+)</name>
        <dbReference type="ChEBI" id="CHEBI:29035"/>
        <label>3</label>
    </ligand>
</feature>